<comment type="function">
    <text evidence="1">K(+)/H(+) antiporter that extrudes potassium in exchange for external protons and maintains the internal concentration of potassium under toxic levels.</text>
</comment>
<comment type="catalytic activity">
    <reaction evidence="1">
        <text>K(+)(in) + H(+)(out) = K(+)(out) + H(+)(in)</text>
        <dbReference type="Rhea" id="RHEA:29467"/>
        <dbReference type="ChEBI" id="CHEBI:15378"/>
        <dbReference type="ChEBI" id="CHEBI:29103"/>
    </reaction>
    <physiologicalReaction direction="left-to-right" evidence="1">
        <dbReference type="Rhea" id="RHEA:29468"/>
    </physiologicalReaction>
</comment>
<comment type="subcellular location">
    <subcellularLocation>
        <location evidence="1">Cell inner membrane</location>
        <topology evidence="1">Multi-pass membrane protein</topology>
    </subcellularLocation>
</comment>
<comment type="similarity">
    <text evidence="1">Belongs to the monovalent cation:proton antiporter 1 (CPA1) transporter (TC 2.A.36) family. NhaP2 subfamily.</text>
</comment>
<comment type="sequence caution" evidence="2">
    <conflict type="erroneous initiation">
        <sequence resource="EMBL-CDS" id="AAG08406"/>
    </conflict>
</comment>
<protein>
    <recommendedName>
        <fullName evidence="1">K(+)/H(+) antiporter NhaP2</fullName>
    </recommendedName>
    <alternativeName>
        <fullName evidence="1">Potassium/proton antiporter NhaP2</fullName>
    </alternativeName>
</protein>
<keyword id="KW-0050">Antiport</keyword>
<keyword id="KW-0997">Cell inner membrane</keyword>
<keyword id="KW-1003">Cell membrane</keyword>
<keyword id="KW-0406">Ion transport</keyword>
<keyword id="KW-0472">Membrane</keyword>
<keyword id="KW-0630">Potassium</keyword>
<keyword id="KW-0633">Potassium transport</keyword>
<keyword id="KW-1185">Reference proteome</keyword>
<keyword id="KW-0812">Transmembrane</keyword>
<keyword id="KW-1133">Transmembrane helix</keyword>
<keyword id="KW-0813">Transport</keyword>
<proteinExistence type="inferred from homology"/>
<dbReference type="EMBL" id="AE004091">
    <property type="protein sequence ID" value="AAG08406.1"/>
    <property type="status" value="ALT_INIT"/>
    <property type="molecule type" value="Genomic_DNA"/>
</dbReference>
<dbReference type="PIR" id="A83018">
    <property type="entry name" value="A83018"/>
</dbReference>
<dbReference type="RefSeq" id="NP_253708.3">
    <property type="nucleotide sequence ID" value="NC_002516.2"/>
</dbReference>
<dbReference type="RefSeq" id="WP_003114562.1">
    <property type="nucleotide sequence ID" value="NZ_QZGE01000002.1"/>
</dbReference>
<dbReference type="RefSeq" id="WP_003121191.1">
    <property type="nucleotide sequence ID" value="NC_002516.2"/>
</dbReference>
<dbReference type="SMR" id="Q9HUE8"/>
<dbReference type="FunCoup" id="Q9HUE8">
    <property type="interactions" value="120"/>
</dbReference>
<dbReference type="STRING" id="208964.PA5021"/>
<dbReference type="PaxDb" id="208964-PA5021"/>
<dbReference type="GeneID" id="881272"/>
<dbReference type="KEGG" id="pae:PA5021"/>
<dbReference type="PATRIC" id="fig|208964.12.peg.5264"/>
<dbReference type="PseudoCAP" id="PA5021"/>
<dbReference type="HOGENOM" id="CLU_005912_9_2_6"/>
<dbReference type="InParanoid" id="Q9HUE8"/>
<dbReference type="OrthoDB" id="9810759at2"/>
<dbReference type="PhylomeDB" id="Q9HUE8"/>
<dbReference type="Proteomes" id="UP000002438">
    <property type="component" value="Chromosome"/>
</dbReference>
<dbReference type="GO" id="GO:0005886">
    <property type="term" value="C:plasma membrane"/>
    <property type="evidence" value="ECO:0007669"/>
    <property type="project" value="UniProtKB-SubCell"/>
</dbReference>
<dbReference type="GO" id="GO:0050660">
    <property type="term" value="F:flavin adenine dinucleotide binding"/>
    <property type="evidence" value="ECO:0007669"/>
    <property type="project" value="InterPro"/>
</dbReference>
<dbReference type="GO" id="GO:0015386">
    <property type="term" value="F:potassium:proton antiporter activity"/>
    <property type="evidence" value="ECO:0000318"/>
    <property type="project" value="GO_Central"/>
</dbReference>
<dbReference type="GO" id="GO:0006884">
    <property type="term" value="P:cell volume homeostasis"/>
    <property type="evidence" value="ECO:0007669"/>
    <property type="project" value="InterPro"/>
</dbReference>
<dbReference type="GO" id="GO:0030007">
    <property type="term" value="P:intracellular potassium ion homeostasis"/>
    <property type="evidence" value="ECO:0000318"/>
    <property type="project" value="GO_Central"/>
</dbReference>
<dbReference type="Gene3D" id="1.20.1530.20">
    <property type="match status" value="1"/>
</dbReference>
<dbReference type="Gene3D" id="3.30.465.10">
    <property type="match status" value="1"/>
</dbReference>
<dbReference type="Gene3D" id="3.30.70.1450">
    <property type="entry name" value="Regulator of K+ conductance, C-terminal domain"/>
    <property type="match status" value="1"/>
</dbReference>
<dbReference type="HAMAP" id="MF_01075">
    <property type="entry name" value="NhaP2"/>
    <property type="match status" value="1"/>
</dbReference>
<dbReference type="InterPro" id="IPR006153">
    <property type="entry name" value="Cation/H_exchanger_TM"/>
</dbReference>
<dbReference type="InterPro" id="IPR036318">
    <property type="entry name" value="FAD-bd_PCMH-like_sf"/>
</dbReference>
<dbReference type="InterPro" id="IPR016169">
    <property type="entry name" value="FAD-bd_PCMH_sub2"/>
</dbReference>
<dbReference type="InterPro" id="IPR038770">
    <property type="entry name" value="Na+/solute_symporter_sf"/>
</dbReference>
<dbReference type="InterPro" id="IPR023729">
    <property type="entry name" value="NhaP2"/>
</dbReference>
<dbReference type="InterPro" id="IPR006037">
    <property type="entry name" value="RCK_C"/>
</dbReference>
<dbReference type="InterPro" id="IPR036721">
    <property type="entry name" value="RCK_C_sf"/>
</dbReference>
<dbReference type="InterPro" id="IPR005170">
    <property type="entry name" value="Transptr-assoc_dom"/>
</dbReference>
<dbReference type="NCBIfam" id="NF003714">
    <property type="entry name" value="PRK05326.1-1"/>
    <property type="match status" value="1"/>
</dbReference>
<dbReference type="NCBIfam" id="NF003715">
    <property type="entry name" value="PRK05326.1-2"/>
    <property type="match status" value="1"/>
</dbReference>
<dbReference type="NCBIfam" id="NF003716">
    <property type="entry name" value="PRK05326.1-3"/>
    <property type="match status" value="1"/>
</dbReference>
<dbReference type="PANTHER" id="PTHR32507:SF7">
    <property type="entry name" value="K(+)_H(+) ANTIPORTER NHAP2"/>
    <property type="match status" value="1"/>
</dbReference>
<dbReference type="PANTHER" id="PTHR32507">
    <property type="entry name" value="NA(+)/H(+) ANTIPORTER 1"/>
    <property type="match status" value="1"/>
</dbReference>
<dbReference type="Pfam" id="PF03471">
    <property type="entry name" value="CorC_HlyC"/>
    <property type="match status" value="1"/>
</dbReference>
<dbReference type="Pfam" id="PF00999">
    <property type="entry name" value="Na_H_Exchanger"/>
    <property type="match status" value="1"/>
</dbReference>
<dbReference type="Pfam" id="PF02080">
    <property type="entry name" value="TrkA_C"/>
    <property type="match status" value="1"/>
</dbReference>
<dbReference type="SMART" id="SM01091">
    <property type="entry name" value="CorC_HlyC"/>
    <property type="match status" value="1"/>
</dbReference>
<dbReference type="SUPFAM" id="SSF56176">
    <property type="entry name" value="FAD-binding/transporter-associated domain-like"/>
    <property type="match status" value="1"/>
</dbReference>
<dbReference type="SUPFAM" id="SSF116726">
    <property type="entry name" value="TrkA C-terminal domain-like"/>
    <property type="match status" value="1"/>
</dbReference>
<dbReference type="PROSITE" id="PS51202">
    <property type="entry name" value="RCK_C"/>
    <property type="match status" value="1"/>
</dbReference>
<sequence length="580" mass="61515">MDAVTVNNFFLIGAVLVGMSILVSSLSSRLGIPILVIFLAVGMIAGNDGVGGIVFDNYPMAYLVGNLALAVILLDGGLRTRVSSFRVALWPALSLATLGVLVTTGLTGIAAAWLFDLHWMEGLLIGAIVGSTDAAAVFSLLGGKGLNERVTATLEIESGSNDPMAVFLTVTLIEMLASGQTGLSWGFALHLVQQFGLGALLGLGGGWLLLQLINRMHLAGGLYPLLVISGGLLVFALANAVGGSGILAIYLCGLLLGNRPIRSRHGILHMLDGMAWLAQIGMFLVLGLLVTPHDLWPIALPALALALWMILVARPLSVLIGLIPFRAFHDREKAFIAWVGLRGAVPIILAVFPLMAGLPNAQLFFNVAFFIVLVSLLVQGTSLPWAARLLRVVVPPDPAPISRAGLEIHPTSEWELFVYHLNKEKWCIGAALRELKMPGGTRIAALFRGTELLHPSGSTILEADDILCVIGHEHDLPALGKLFSQAPDRGLGARFFGDFVLEGDAQLSAVASLYGLKLDGIDGEQALGRFIAHEIGGEAVIGDQVEWNGLTWTVAALEGNRIRKVGVKFPEGRPGPGLFL</sequence>
<feature type="chain" id="PRO_0000052390" description="K(+)/H(+) antiporter NhaP2">
    <location>
        <begin position="1"/>
        <end position="580"/>
    </location>
</feature>
<feature type="transmembrane region" description="Helical" evidence="1">
    <location>
        <begin position="3"/>
        <end position="23"/>
    </location>
</feature>
<feature type="transmembrane region" description="Helical" evidence="1">
    <location>
        <begin position="34"/>
        <end position="54"/>
    </location>
</feature>
<feature type="transmembrane region" description="Helical" evidence="1">
    <location>
        <begin position="58"/>
        <end position="78"/>
    </location>
</feature>
<feature type="transmembrane region" description="Helical" evidence="1">
    <location>
        <begin position="95"/>
        <end position="115"/>
    </location>
</feature>
<feature type="transmembrane region" description="Helical" evidence="1">
    <location>
        <begin position="122"/>
        <end position="142"/>
    </location>
</feature>
<feature type="transmembrane region" description="Helical" evidence="1">
    <location>
        <begin position="163"/>
        <end position="183"/>
    </location>
</feature>
<feature type="transmembrane region" description="Helical" evidence="1">
    <location>
        <begin position="189"/>
        <end position="209"/>
    </location>
</feature>
<feature type="transmembrane region" description="Helical" evidence="1">
    <location>
        <begin position="218"/>
        <end position="238"/>
    </location>
</feature>
<feature type="transmembrane region" description="Helical" evidence="1">
    <location>
        <begin position="241"/>
        <end position="261"/>
    </location>
</feature>
<feature type="transmembrane region" description="Helical" evidence="1">
    <location>
        <begin position="270"/>
        <end position="290"/>
    </location>
</feature>
<feature type="transmembrane region" description="Helical" evidence="1">
    <location>
        <begin position="303"/>
        <end position="323"/>
    </location>
</feature>
<feature type="transmembrane region" description="Helical" evidence="1">
    <location>
        <begin position="335"/>
        <end position="355"/>
    </location>
</feature>
<feature type="transmembrane region" description="Helical" evidence="1">
    <location>
        <begin position="363"/>
        <end position="383"/>
    </location>
</feature>
<feature type="domain" description="RCK C-terminal" evidence="1">
    <location>
        <begin position="403"/>
        <end position="485"/>
    </location>
</feature>
<organism>
    <name type="scientific">Pseudomonas aeruginosa (strain ATCC 15692 / DSM 22644 / CIP 104116 / JCM 14847 / LMG 12228 / 1C / PRS 101 / PAO1)</name>
    <dbReference type="NCBI Taxonomy" id="208964"/>
    <lineage>
        <taxon>Bacteria</taxon>
        <taxon>Pseudomonadati</taxon>
        <taxon>Pseudomonadota</taxon>
        <taxon>Gammaproteobacteria</taxon>
        <taxon>Pseudomonadales</taxon>
        <taxon>Pseudomonadaceae</taxon>
        <taxon>Pseudomonas</taxon>
    </lineage>
</organism>
<gene>
    <name evidence="1" type="primary">nhaP2</name>
    <name type="synonym">cvrA</name>
    <name type="ordered locus">PA5021</name>
</gene>
<accession>Q9HUE8</accession>
<evidence type="ECO:0000255" key="1">
    <source>
        <dbReference type="HAMAP-Rule" id="MF_01075"/>
    </source>
</evidence>
<evidence type="ECO:0000305" key="2"/>
<name>NHAP2_PSEAE</name>
<reference key="1">
    <citation type="journal article" date="2000" name="Nature">
        <title>Complete genome sequence of Pseudomonas aeruginosa PAO1, an opportunistic pathogen.</title>
        <authorList>
            <person name="Stover C.K."/>
            <person name="Pham X.-Q.T."/>
            <person name="Erwin A.L."/>
            <person name="Mizoguchi S.D."/>
            <person name="Warrener P."/>
            <person name="Hickey M.J."/>
            <person name="Brinkman F.S.L."/>
            <person name="Hufnagle W.O."/>
            <person name="Kowalik D.J."/>
            <person name="Lagrou M."/>
            <person name="Garber R.L."/>
            <person name="Goltry L."/>
            <person name="Tolentino E."/>
            <person name="Westbrock-Wadman S."/>
            <person name="Yuan Y."/>
            <person name="Brody L.L."/>
            <person name="Coulter S.N."/>
            <person name="Folger K.R."/>
            <person name="Kas A."/>
            <person name="Larbig K."/>
            <person name="Lim R.M."/>
            <person name="Smith K.A."/>
            <person name="Spencer D.H."/>
            <person name="Wong G.K.-S."/>
            <person name="Wu Z."/>
            <person name="Paulsen I.T."/>
            <person name="Reizer J."/>
            <person name="Saier M.H. Jr."/>
            <person name="Hancock R.E.W."/>
            <person name="Lory S."/>
            <person name="Olson M.V."/>
        </authorList>
    </citation>
    <scope>NUCLEOTIDE SEQUENCE [LARGE SCALE GENOMIC DNA]</scope>
    <source>
        <strain>ATCC 15692 / DSM 22644 / CIP 104116 / JCM 14847 / LMG 12228 / 1C / PRS 101 / PAO1</strain>
    </source>
</reference>